<keyword id="KW-0929">Antimicrobial</keyword>
<keyword id="KW-1015">Disulfide bond</keyword>
<keyword id="KW-0295">Fungicide</keyword>
<keyword id="KW-0611">Plant defense</keyword>
<keyword id="KW-1185">Reference proteome</keyword>
<keyword id="KW-0964">Secreted</keyword>
<keyword id="KW-0732">Signal</keyword>
<evidence type="ECO:0000250" key="1"/>
<evidence type="ECO:0000255" key="2"/>
<evidence type="ECO:0000305" key="3"/>
<name>DF112_ARATH</name>
<accession>Q2V488</accession>
<gene>
    <name type="ordered locus">At2g12475</name>
    <name type="ORF">T27D6</name>
</gene>
<feature type="signal peptide" evidence="2">
    <location>
        <begin position="1"/>
        <end position="24"/>
    </location>
</feature>
<feature type="chain" id="PRO_0000379674" description="Defensin-like protein 112">
    <location>
        <begin position="25"/>
        <end position="85"/>
    </location>
</feature>
<feature type="disulfide bond" evidence="1">
    <location>
        <begin position="40"/>
        <end position="80"/>
    </location>
</feature>
<feature type="disulfide bond" evidence="1">
    <location>
        <begin position="46"/>
        <end position="71"/>
    </location>
</feature>
<feature type="disulfide bond" evidence="1">
    <location>
        <begin position="56"/>
        <end position="78"/>
    </location>
</feature>
<feature type="disulfide bond" evidence="1">
    <location>
        <begin position="60"/>
        <end position="79"/>
    </location>
</feature>
<proteinExistence type="evidence at transcript level"/>
<organism>
    <name type="scientific">Arabidopsis thaliana</name>
    <name type="common">Mouse-ear cress</name>
    <dbReference type="NCBI Taxonomy" id="3702"/>
    <lineage>
        <taxon>Eukaryota</taxon>
        <taxon>Viridiplantae</taxon>
        <taxon>Streptophyta</taxon>
        <taxon>Embryophyta</taxon>
        <taxon>Tracheophyta</taxon>
        <taxon>Spermatophyta</taxon>
        <taxon>Magnoliopsida</taxon>
        <taxon>eudicotyledons</taxon>
        <taxon>Gunneridae</taxon>
        <taxon>Pentapetalae</taxon>
        <taxon>rosids</taxon>
        <taxon>malvids</taxon>
        <taxon>Brassicales</taxon>
        <taxon>Brassicaceae</taxon>
        <taxon>Camelineae</taxon>
        <taxon>Arabidopsis</taxon>
    </lineage>
</organism>
<sequence>MAISKKMLTTFVLTILLAVSFVHCSDRTSGVGINQEYAKCYDLADCQKPKVDDAACERFCGAKSFLLYGKCDTATNKCCCKSKTK</sequence>
<comment type="subcellular location">
    <subcellularLocation>
        <location evidence="1">Secreted</location>
    </subcellularLocation>
</comment>
<comment type="similarity">
    <text evidence="3">Belongs to the DEFL family.</text>
</comment>
<protein>
    <recommendedName>
        <fullName>Defensin-like protein 112</fullName>
    </recommendedName>
</protein>
<reference key="1">
    <citation type="journal article" date="1999" name="Nature">
        <title>Sequence and analysis of chromosome 2 of the plant Arabidopsis thaliana.</title>
        <authorList>
            <person name="Lin X."/>
            <person name="Kaul S."/>
            <person name="Rounsley S.D."/>
            <person name="Shea T.P."/>
            <person name="Benito M.-I."/>
            <person name="Town C.D."/>
            <person name="Fujii C.Y."/>
            <person name="Mason T.M."/>
            <person name="Bowman C.L."/>
            <person name="Barnstead M.E."/>
            <person name="Feldblyum T.V."/>
            <person name="Buell C.R."/>
            <person name="Ketchum K.A."/>
            <person name="Lee J.J."/>
            <person name="Ronning C.M."/>
            <person name="Koo H.L."/>
            <person name="Moffat K.S."/>
            <person name="Cronin L.A."/>
            <person name="Shen M."/>
            <person name="Pai G."/>
            <person name="Van Aken S."/>
            <person name="Umayam L."/>
            <person name="Tallon L.J."/>
            <person name="Gill J.E."/>
            <person name="Adams M.D."/>
            <person name="Carrera A.J."/>
            <person name="Creasy T.H."/>
            <person name="Goodman H.M."/>
            <person name="Somerville C.R."/>
            <person name="Copenhaver G.P."/>
            <person name="Preuss D."/>
            <person name="Nierman W.C."/>
            <person name="White O."/>
            <person name="Eisen J.A."/>
            <person name="Salzberg S.L."/>
            <person name="Fraser C.M."/>
            <person name="Venter J.C."/>
        </authorList>
    </citation>
    <scope>NUCLEOTIDE SEQUENCE [LARGE SCALE GENOMIC DNA]</scope>
    <source>
        <strain>cv. Columbia</strain>
    </source>
</reference>
<reference key="2">
    <citation type="journal article" date="2017" name="Plant J.">
        <title>Araport11: a complete reannotation of the Arabidopsis thaliana reference genome.</title>
        <authorList>
            <person name="Cheng C.Y."/>
            <person name="Krishnakumar V."/>
            <person name="Chan A.P."/>
            <person name="Thibaud-Nissen F."/>
            <person name="Schobel S."/>
            <person name="Town C.D."/>
        </authorList>
    </citation>
    <scope>GENOME REANNOTATION</scope>
    <source>
        <strain>cv. Columbia</strain>
    </source>
</reference>
<reference key="3">
    <citation type="journal article" date="2005" name="Plant Physiol.">
        <title>Genome organization of more than 300 defensin-like genes in Arabidopsis.</title>
        <authorList>
            <person name="Silverstein K.A.T."/>
            <person name="Graham M.A."/>
            <person name="Paape T.D."/>
            <person name="VandenBosch K.A."/>
        </authorList>
    </citation>
    <scope>GENE FAMILY</scope>
</reference>
<dbReference type="EMBL" id="AC007268">
    <property type="status" value="NOT_ANNOTATED_CDS"/>
    <property type="molecule type" value="Genomic_DNA"/>
</dbReference>
<dbReference type="EMBL" id="CP002685">
    <property type="protein sequence ID" value="AEC06201.1"/>
    <property type="molecule type" value="Genomic_DNA"/>
</dbReference>
<dbReference type="RefSeq" id="NP_001031350.1">
    <property type="nucleotide sequence ID" value="NM_001036273.2"/>
</dbReference>
<dbReference type="STRING" id="3702.Q2V488"/>
<dbReference type="PaxDb" id="3702-AT2G12475.1"/>
<dbReference type="ProteomicsDB" id="224142"/>
<dbReference type="EnsemblPlants" id="AT2G12475.1">
    <property type="protein sequence ID" value="AT2G12475.1"/>
    <property type="gene ID" value="AT2G12475"/>
</dbReference>
<dbReference type="GeneID" id="3768123"/>
<dbReference type="Gramene" id="AT2G12475.1">
    <property type="protein sequence ID" value="AT2G12475.1"/>
    <property type="gene ID" value="AT2G12475"/>
</dbReference>
<dbReference type="KEGG" id="ath:AT2G12475"/>
<dbReference type="Araport" id="AT2G12475"/>
<dbReference type="TAIR" id="AT2G12475"/>
<dbReference type="HOGENOM" id="CLU_183259_1_0_1"/>
<dbReference type="InParanoid" id="Q2V488"/>
<dbReference type="OMA" id="CCCKSKT"/>
<dbReference type="PhylomeDB" id="Q2V488"/>
<dbReference type="PRO" id="PR:Q2V488"/>
<dbReference type="Proteomes" id="UP000006548">
    <property type="component" value="Chromosome 2"/>
</dbReference>
<dbReference type="ExpressionAtlas" id="Q2V488">
    <property type="expression patterns" value="baseline and differential"/>
</dbReference>
<dbReference type="GO" id="GO:0005576">
    <property type="term" value="C:extracellular region"/>
    <property type="evidence" value="ECO:0007669"/>
    <property type="project" value="UniProtKB-SubCell"/>
</dbReference>
<dbReference type="GO" id="GO:0050832">
    <property type="term" value="P:defense response to fungus"/>
    <property type="evidence" value="ECO:0007669"/>
    <property type="project" value="UniProtKB-KW"/>
</dbReference>
<dbReference type="GO" id="GO:0031640">
    <property type="term" value="P:killing of cells of another organism"/>
    <property type="evidence" value="ECO:0007669"/>
    <property type="project" value="UniProtKB-KW"/>
</dbReference>